<evidence type="ECO:0000255" key="1">
    <source>
        <dbReference type="HAMAP-Rule" id="MF_01636"/>
    </source>
</evidence>
<sequence>MSFKDLRSFIDHLEANGELKRISYPVDPYLEMTEIADRVLRSGGPALLFENPKDNTMPVLVNLFGTPKRVAMALGKEDPLALREVGELLAFLKEPEPPTGFKDALAKLPKFKQALNMPPKSVSHAPCQQVVITGDEVDLTALPIQHCWPGDVAPLVTWGLTITKGPRQKRQNLGIYRQQLLGKNKLIMRWLDHRGGALDFKDFKELHPGERYPVVVALGSDPVTILAAVTPVPDSMSEYAFAGLLRGERTEVCKAISCDLEVPATSEIILEGYIDPNEMAEEGPYGDHTGYYNETDSFPVFTVTHITKRKDAIYHSTYTGRPPDEPAMLGVALNEVFVPILRKQYPEIIDFYLPPEGCSYRMAVISIRKQYPGHAKRVMMGAWSFLRQFMYTKFIIVVDEDVNCRDWQDVIWAITTRMDPTRDTTLIDHTPIDYLDFASPVAGLGSKMGLDATNKWPGETQREWGTPIVMDPNVKQKVDEIWQDLGIDSHPTL</sequence>
<dbReference type="EC" id="4.1.1.98" evidence="1"/>
<dbReference type="EMBL" id="CP000302">
    <property type="protein sequence ID" value="ABE56337.1"/>
    <property type="molecule type" value="Genomic_DNA"/>
</dbReference>
<dbReference type="RefSeq" id="WP_011497483.1">
    <property type="nucleotide sequence ID" value="NC_007954.1"/>
</dbReference>
<dbReference type="SMR" id="Q12JN9"/>
<dbReference type="STRING" id="318161.Sden_3059"/>
<dbReference type="KEGG" id="sdn:Sden_3059"/>
<dbReference type="eggNOG" id="COG0043">
    <property type="taxonomic scope" value="Bacteria"/>
</dbReference>
<dbReference type="HOGENOM" id="CLU_023348_4_1_6"/>
<dbReference type="OrthoDB" id="9809841at2"/>
<dbReference type="UniPathway" id="UPA00232"/>
<dbReference type="Proteomes" id="UP000001982">
    <property type="component" value="Chromosome"/>
</dbReference>
<dbReference type="GO" id="GO:0005829">
    <property type="term" value="C:cytosol"/>
    <property type="evidence" value="ECO:0007669"/>
    <property type="project" value="TreeGrafter"/>
</dbReference>
<dbReference type="GO" id="GO:0005886">
    <property type="term" value="C:plasma membrane"/>
    <property type="evidence" value="ECO:0007669"/>
    <property type="project" value="UniProtKB-SubCell"/>
</dbReference>
<dbReference type="GO" id="GO:0008694">
    <property type="term" value="F:3-octaprenyl-4-hydroxybenzoate carboxy-lyase activity"/>
    <property type="evidence" value="ECO:0007669"/>
    <property type="project" value="UniProtKB-UniRule"/>
</dbReference>
<dbReference type="GO" id="GO:0046872">
    <property type="term" value="F:metal ion binding"/>
    <property type="evidence" value="ECO:0007669"/>
    <property type="project" value="UniProtKB-KW"/>
</dbReference>
<dbReference type="GO" id="GO:0006744">
    <property type="term" value="P:ubiquinone biosynthetic process"/>
    <property type="evidence" value="ECO:0007669"/>
    <property type="project" value="UniProtKB-UniRule"/>
</dbReference>
<dbReference type="FunFam" id="1.20.5.570:FF:000001">
    <property type="entry name" value="3-octaprenyl-4-hydroxybenzoate carboxy-lyase"/>
    <property type="match status" value="1"/>
</dbReference>
<dbReference type="FunFam" id="3.40.1670.10:FF:000001">
    <property type="entry name" value="3-octaprenyl-4-hydroxybenzoate carboxy-lyase"/>
    <property type="match status" value="1"/>
</dbReference>
<dbReference type="Gene3D" id="1.20.5.570">
    <property type="entry name" value="Single helix bin"/>
    <property type="match status" value="1"/>
</dbReference>
<dbReference type="Gene3D" id="3.40.1670.10">
    <property type="entry name" value="UbiD C-terminal domain-like"/>
    <property type="match status" value="1"/>
</dbReference>
<dbReference type="HAMAP" id="MF_01636">
    <property type="entry name" value="UbiD"/>
    <property type="match status" value="1"/>
</dbReference>
<dbReference type="InterPro" id="IPR002830">
    <property type="entry name" value="UbiD"/>
</dbReference>
<dbReference type="InterPro" id="IPR049381">
    <property type="entry name" value="UbiD-like_C"/>
</dbReference>
<dbReference type="InterPro" id="IPR049383">
    <property type="entry name" value="UbiD-like_N"/>
</dbReference>
<dbReference type="InterPro" id="IPR023677">
    <property type="entry name" value="UbiD_bacteria"/>
</dbReference>
<dbReference type="InterPro" id="IPR048304">
    <property type="entry name" value="UbiD_Rift_dom"/>
</dbReference>
<dbReference type="NCBIfam" id="NF008175">
    <property type="entry name" value="PRK10922.1"/>
    <property type="match status" value="1"/>
</dbReference>
<dbReference type="NCBIfam" id="TIGR00148">
    <property type="entry name" value="UbiD family decarboxylase"/>
    <property type="match status" value="1"/>
</dbReference>
<dbReference type="PANTHER" id="PTHR30108">
    <property type="entry name" value="3-OCTAPRENYL-4-HYDROXYBENZOATE CARBOXY-LYASE-RELATED"/>
    <property type="match status" value="1"/>
</dbReference>
<dbReference type="PANTHER" id="PTHR30108:SF17">
    <property type="entry name" value="FERULIC ACID DECARBOXYLASE 1"/>
    <property type="match status" value="1"/>
</dbReference>
<dbReference type="Pfam" id="PF01977">
    <property type="entry name" value="UbiD"/>
    <property type="match status" value="1"/>
</dbReference>
<dbReference type="Pfam" id="PF20696">
    <property type="entry name" value="UbiD_C"/>
    <property type="match status" value="1"/>
</dbReference>
<dbReference type="Pfam" id="PF20695">
    <property type="entry name" value="UbiD_N"/>
    <property type="match status" value="1"/>
</dbReference>
<dbReference type="SUPFAM" id="SSF50475">
    <property type="entry name" value="FMN-binding split barrel"/>
    <property type="match status" value="1"/>
</dbReference>
<dbReference type="SUPFAM" id="SSF143968">
    <property type="entry name" value="UbiD C-terminal domain-like"/>
    <property type="match status" value="1"/>
</dbReference>
<name>UBID_SHEDO</name>
<reference key="1">
    <citation type="submission" date="2006-03" db="EMBL/GenBank/DDBJ databases">
        <title>Complete sequence of Shewanella denitrificans OS217.</title>
        <authorList>
            <consortium name="US DOE Joint Genome Institute"/>
            <person name="Copeland A."/>
            <person name="Lucas S."/>
            <person name="Lapidus A."/>
            <person name="Barry K."/>
            <person name="Detter J.C."/>
            <person name="Glavina del Rio T."/>
            <person name="Hammon N."/>
            <person name="Israni S."/>
            <person name="Dalin E."/>
            <person name="Tice H."/>
            <person name="Pitluck S."/>
            <person name="Brettin T."/>
            <person name="Bruce D."/>
            <person name="Han C."/>
            <person name="Tapia R."/>
            <person name="Gilna P."/>
            <person name="Kiss H."/>
            <person name="Schmutz J."/>
            <person name="Larimer F."/>
            <person name="Land M."/>
            <person name="Hauser L."/>
            <person name="Kyrpides N."/>
            <person name="Lykidis A."/>
            <person name="Richardson P."/>
        </authorList>
    </citation>
    <scope>NUCLEOTIDE SEQUENCE [LARGE SCALE GENOMIC DNA]</scope>
    <source>
        <strain>OS217 / ATCC BAA-1090 / DSM 15013</strain>
    </source>
</reference>
<accession>Q12JN9</accession>
<comment type="function">
    <text evidence="1">Catalyzes the decarboxylation of 3-octaprenyl-4-hydroxy benzoate to 2-octaprenylphenol, an intermediate step in ubiquinone biosynthesis.</text>
</comment>
<comment type="catalytic activity">
    <reaction evidence="1">
        <text>a 4-hydroxy-3-(all-trans-polyprenyl)benzoate + H(+) = a 2-(all-trans-polyprenyl)phenol + CO2</text>
        <dbReference type="Rhea" id="RHEA:41680"/>
        <dbReference type="Rhea" id="RHEA-COMP:9514"/>
        <dbReference type="Rhea" id="RHEA-COMP:9516"/>
        <dbReference type="ChEBI" id="CHEBI:1269"/>
        <dbReference type="ChEBI" id="CHEBI:15378"/>
        <dbReference type="ChEBI" id="CHEBI:16526"/>
        <dbReference type="ChEBI" id="CHEBI:78396"/>
        <dbReference type="EC" id="4.1.1.98"/>
    </reaction>
</comment>
<comment type="cofactor">
    <cofactor evidence="1">
        <name>prenylated FMN</name>
        <dbReference type="ChEBI" id="CHEBI:87746"/>
    </cofactor>
    <text evidence="1">Binds 1 prenylated FMN per subunit.</text>
</comment>
<comment type="cofactor">
    <cofactor evidence="1">
        <name>Mn(2+)</name>
        <dbReference type="ChEBI" id="CHEBI:29035"/>
    </cofactor>
</comment>
<comment type="pathway">
    <text evidence="1">Cofactor biosynthesis; ubiquinone biosynthesis.</text>
</comment>
<comment type="subunit">
    <text evidence="1">Homohexamer.</text>
</comment>
<comment type="subcellular location">
    <subcellularLocation>
        <location evidence="1">Cell membrane</location>
        <topology evidence="1">Peripheral membrane protein</topology>
    </subcellularLocation>
</comment>
<comment type="similarity">
    <text evidence="1">Belongs to the UbiD family.</text>
</comment>
<protein>
    <recommendedName>
        <fullName evidence="1">3-octaprenyl-4-hydroxybenzoate carboxy-lyase</fullName>
        <ecNumber evidence="1">4.1.1.98</ecNumber>
    </recommendedName>
    <alternativeName>
        <fullName evidence="1">Polyprenyl p-hydroxybenzoate decarboxylase</fullName>
    </alternativeName>
</protein>
<keyword id="KW-1003">Cell membrane</keyword>
<keyword id="KW-0210">Decarboxylase</keyword>
<keyword id="KW-0285">Flavoprotein</keyword>
<keyword id="KW-0288">FMN</keyword>
<keyword id="KW-0456">Lyase</keyword>
<keyword id="KW-0464">Manganese</keyword>
<keyword id="KW-0472">Membrane</keyword>
<keyword id="KW-0479">Metal-binding</keyword>
<keyword id="KW-1185">Reference proteome</keyword>
<keyword id="KW-0831">Ubiquinone biosynthesis</keyword>
<feature type="chain" id="PRO_0000267694" description="3-octaprenyl-4-hydroxybenzoate carboxy-lyase">
    <location>
        <begin position="1"/>
        <end position="493"/>
    </location>
</feature>
<feature type="active site" description="Proton donor" evidence="1">
    <location>
        <position position="287"/>
    </location>
</feature>
<feature type="binding site" evidence="1">
    <location>
        <position position="172"/>
    </location>
    <ligand>
        <name>Mn(2+)</name>
        <dbReference type="ChEBI" id="CHEBI:29035"/>
    </ligand>
</feature>
<feature type="binding site" evidence="1">
    <location>
        <begin position="175"/>
        <end position="177"/>
    </location>
    <ligand>
        <name>prenylated FMN</name>
        <dbReference type="ChEBI" id="CHEBI:87746"/>
    </ligand>
</feature>
<feature type="binding site" evidence="1">
    <location>
        <begin position="189"/>
        <end position="191"/>
    </location>
    <ligand>
        <name>prenylated FMN</name>
        <dbReference type="ChEBI" id="CHEBI:87746"/>
    </ligand>
</feature>
<feature type="binding site" evidence="1">
    <location>
        <begin position="194"/>
        <end position="195"/>
    </location>
    <ligand>
        <name>prenylated FMN</name>
        <dbReference type="ChEBI" id="CHEBI:87746"/>
    </ligand>
</feature>
<feature type="binding site" evidence="1">
    <location>
        <position position="238"/>
    </location>
    <ligand>
        <name>Mn(2+)</name>
        <dbReference type="ChEBI" id="CHEBI:29035"/>
    </ligand>
</feature>
<organism>
    <name type="scientific">Shewanella denitrificans (strain OS217 / ATCC BAA-1090 / DSM 15013)</name>
    <dbReference type="NCBI Taxonomy" id="318161"/>
    <lineage>
        <taxon>Bacteria</taxon>
        <taxon>Pseudomonadati</taxon>
        <taxon>Pseudomonadota</taxon>
        <taxon>Gammaproteobacteria</taxon>
        <taxon>Alteromonadales</taxon>
        <taxon>Shewanellaceae</taxon>
        <taxon>Shewanella</taxon>
    </lineage>
</organism>
<gene>
    <name evidence="1" type="primary">ubiD</name>
    <name type="ordered locus">Sden_3059</name>
</gene>
<proteinExistence type="inferred from homology"/>